<feature type="chain" id="PRO_0000091634" description="3-hydroxyacyl-[acyl-carrier-protein] dehydratase FabZ">
    <location>
        <begin position="1"/>
        <end position="144"/>
    </location>
</feature>
<feature type="active site" evidence="1">
    <location>
        <position position="48"/>
    </location>
</feature>
<dbReference type="EC" id="4.2.1.59" evidence="1"/>
<dbReference type="EMBL" id="AE016879">
    <property type="protein sequence ID" value="AAP29153.1"/>
    <property type="molecule type" value="Genomic_DNA"/>
</dbReference>
<dbReference type="EMBL" id="AE017334">
    <property type="protein sequence ID" value="AAT34649.1"/>
    <property type="molecule type" value="Genomic_DNA"/>
</dbReference>
<dbReference type="EMBL" id="AE017225">
    <property type="protein sequence ID" value="AAT57405.1"/>
    <property type="molecule type" value="Genomic_DNA"/>
</dbReference>
<dbReference type="RefSeq" id="NP_847667.1">
    <property type="nucleotide sequence ID" value="NC_003997.3"/>
</dbReference>
<dbReference type="RefSeq" id="WP_000884318.1">
    <property type="nucleotide sequence ID" value="NZ_WXXJ01000017.1"/>
</dbReference>
<dbReference type="RefSeq" id="YP_031355.1">
    <property type="nucleotide sequence ID" value="NC_005945.1"/>
</dbReference>
<dbReference type="SMR" id="Q81JE0"/>
<dbReference type="IntAct" id="Q81JE0">
    <property type="interactions" value="1"/>
</dbReference>
<dbReference type="STRING" id="261594.GBAA_5508"/>
<dbReference type="DNASU" id="1085152"/>
<dbReference type="GeneID" id="93005856"/>
<dbReference type="KEGG" id="ban:BA_5508"/>
<dbReference type="KEGG" id="bar:GBAA_5508"/>
<dbReference type="KEGG" id="bat:BAS5116"/>
<dbReference type="PATRIC" id="fig|198094.11.peg.5466"/>
<dbReference type="eggNOG" id="COG0764">
    <property type="taxonomic scope" value="Bacteria"/>
</dbReference>
<dbReference type="HOGENOM" id="CLU_078912_3_0_9"/>
<dbReference type="OMA" id="FPGRPLM"/>
<dbReference type="OrthoDB" id="9772788at2"/>
<dbReference type="Proteomes" id="UP000000427">
    <property type="component" value="Chromosome"/>
</dbReference>
<dbReference type="Proteomes" id="UP000000594">
    <property type="component" value="Chromosome"/>
</dbReference>
<dbReference type="GO" id="GO:0005737">
    <property type="term" value="C:cytoplasm"/>
    <property type="evidence" value="ECO:0007669"/>
    <property type="project" value="UniProtKB-SubCell"/>
</dbReference>
<dbReference type="GO" id="GO:0016020">
    <property type="term" value="C:membrane"/>
    <property type="evidence" value="ECO:0007669"/>
    <property type="project" value="GOC"/>
</dbReference>
<dbReference type="GO" id="GO:0019171">
    <property type="term" value="F:(3R)-hydroxyacyl-[acyl-carrier-protein] dehydratase activity"/>
    <property type="evidence" value="ECO:0007669"/>
    <property type="project" value="UniProtKB-EC"/>
</dbReference>
<dbReference type="GO" id="GO:0006633">
    <property type="term" value="P:fatty acid biosynthetic process"/>
    <property type="evidence" value="ECO:0007669"/>
    <property type="project" value="UniProtKB-UniRule"/>
</dbReference>
<dbReference type="GO" id="GO:0009245">
    <property type="term" value="P:lipid A biosynthetic process"/>
    <property type="evidence" value="ECO:0007669"/>
    <property type="project" value="UniProtKB-UniRule"/>
</dbReference>
<dbReference type="CDD" id="cd01288">
    <property type="entry name" value="FabZ"/>
    <property type="match status" value="1"/>
</dbReference>
<dbReference type="FunFam" id="3.10.129.10:FF:000001">
    <property type="entry name" value="3-hydroxyacyl-[acyl-carrier-protein] dehydratase FabZ"/>
    <property type="match status" value="1"/>
</dbReference>
<dbReference type="Gene3D" id="3.10.129.10">
    <property type="entry name" value="Hotdog Thioesterase"/>
    <property type="match status" value="1"/>
</dbReference>
<dbReference type="HAMAP" id="MF_00406">
    <property type="entry name" value="FabZ"/>
    <property type="match status" value="1"/>
</dbReference>
<dbReference type="InterPro" id="IPR013114">
    <property type="entry name" value="FabA_FabZ"/>
</dbReference>
<dbReference type="InterPro" id="IPR010084">
    <property type="entry name" value="FabZ"/>
</dbReference>
<dbReference type="InterPro" id="IPR029069">
    <property type="entry name" value="HotDog_dom_sf"/>
</dbReference>
<dbReference type="NCBIfam" id="TIGR01750">
    <property type="entry name" value="fabZ"/>
    <property type="match status" value="1"/>
</dbReference>
<dbReference type="NCBIfam" id="NF000582">
    <property type="entry name" value="PRK00006.1"/>
    <property type="match status" value="1"/>
</dbReference>
<dbReference type="PANTHER" id="PTHR30272">
    <property type="entry name" value="3-HYDROXYACYL-[ACYL-CARRIER-PROTEIN] DEHYDRATASE"/>
    <property type="match status" value="1"/>
</dbReference>
<dbReference type="PANTHER" id="PTHR30272:SF1">
    <property type="entry name" value="3-HYDROXYACYL-[ACYL-CARRIER-PROTEIN] DEHYDRATASE"/>
    <property type="match status" value="1"/>
</dbReference>
<dbReference type="Pfam" id="PF07977">
    <property type="entry name" value="FabA"/>
    <property type="match status" value="1"/>
</dbReference>
<dbReference type="SUPFAM" id="SSF54637">
    <property type="entry name" value="Thioesterase/thiol ester dehydrase-isomerase"/>
    <property type="match status" value="1"/>
</dbReference>
<proteinExistence type="inferred from homology"/>
<accession>Q81JE0</accession>
<accession>Q6HQN3</accession>
<accession>Q6KK06</accession>
<reference key="1">
    <citation type="journal article" date="2003" name="Nature">
        <title>The genome sequence of Bacillus anthracis Ames and comparison to closely related bacteria.</title>
        <authorList>
            <person name="Read T.D."/>
            <person name="Peterson S.N."/>
            <person name="Tourasse N.J."/>
            <person name="Baillie L.W."/>
            <person name="Paulsen I.T."/>
            <person name="Nelson K.E."/>
            <person name="Tettelin H."/>
            <person name="Fouts D.E."/>
            <person name="Eisen J.A."/>
            <person name="Gill S.R."/>
            <person name="Holtzapple E.K."/>
            <person name="Okstad O.A."/>
            <person name="Helgason E."/>
            <person name="Rilstone J."/>
            <person name="Wu M."/>
            <person name="Kolonay J.F."/>
            <person name="Beanan M.J."/>
            <person name="Dodson R.J."/>
            <person name="Brinkac L.M."/>
            <person name="Gwinn M.L."/>
            <person name="DeBoy R.T."/>
            <person name="Madpu R."/>
            <person name="Daugherty S.C."/>
            <person name="Durkin A.S."/>
            <person name="Haft D.H."/>
            <person name="Nelson W.C."/>
            <person name="Peterson J.D."/>
            <person name="Pop M."/>
            <person name="Khouri H.M."/>
            <person name="Radune D."/>
            <person name="Benton J.L."/>
            <person name="Mahamoud Y."/>
            <person name="Jiang L."/>
            <person name="Hance I.R."/>
            <person name="Weidman J.F."/>
            <person name="Berry K.J."/>
            <person name="Plaut R.D."/>
            <person name="Wolf A.M."/>
            <person name="Watkins K.L."/>
            <person name="Nierman W.C."/>
            <person name="Hazen A."/>
            <person name="Cline R.T."/>
            <person name="Redmond C."/>
            <person name="Thwaite J.E."/>
            <person name="White O."/>
            <person name="Salzberg S.L."/>
            <person name="Thomason B."/>
            <person name="Friedlander A.M."/>
            <person name="Koehler T.M."/>
            <person name="Hanna P.C."/>
            <person name="Kolstoe A.-B."/>
            <person name="Fraser C.M."/>
        </authorList>
    </citation>
    <scope>NUCLEOTIDE SEQUENCE [LARGE SCALE GENOMIC DNA]</scope>
    <source>
        <strain>Ames / isolate Porton</strain>
    </source>
</reference>
<reference key="2">
    <citation type="journal article" date="2009" name="J. Bacteriol.">
        <title>The complete genome sequence of Bacillus anthracis Ames 'Ancestor'.</title>
        <authorList>
            <person name="Ravel J."/>
            <person name="Jiang L."/>
            <person name="Stanley S.T."/>
            <person name="Wilson M.R."/>
            <person name="Decker R.S."/>
            <person name="Read T.D."/>
            <person name="Worsham P."/>
            <person name="Keim P.S."/>
            <person name="Salzberg S.L."/>
            <person name="Fraser-Liggett C.M."/>
            <person name="Rasko D.A."/>
        </authorList>
    </citation>
    <scope>NUCLEOTIDE SEQUENCE [LARGE SCALE GENOMIC DNA]</scope>
    <source>
        <strain>Ames ancestor</strain>
    </source>
</reference>
<reference key="3">
    <citation type="submission" date="2004-01" db="EMBL/GenBank/DDBJ databases">
        <title>Complete genome sequence of Bacillus anthracis Sterne.</title>
        <authorList>
            <person name="Brettin T.S."/>
            <person name="Bruce D."/>
            <person name="Challacombe J.F."/>
            <person name="Gilna P."/>
            <person name="Han C."/>
            <person name="Hill K."/>
            <person name="Hitchcock P."/>
            <person name="Jackson P."/>
            <person name="Keim P."/>
            <person name="Longmire J."/>
            <person name="Lucas S."/>
            <person name="Okinaka R."/>
            <person name="Richardson P."/>
            <person name="Rubin E."/>
            <person name="Tice H."/>
        </authorList>
    </citation>
    <scope>NUCLEOTIDE SEQUENCE [LARGE SCALE GENOMIC DNA]</scope>
    <source>
        <strain>Sterne</strain>
    </source>
</reference>
<comment type="function">
    <text evidence="1">Involved in unsaturated fatty acids biosynthesis. Catalyzes the dehydration of short chain beta-hydroxyacyl-ACPs and long chain saturated and unsaturated beta-hydroxyacyl-ACPs.</text>
</comment>
<comment type="catalytic activity">
    <reaction evidence="1">
        <text>a (3R)-hydroxyacyl-[ACP] = a (2E)-enoyl-[ACP] + H2O</text>
        <dbReference type="Rhea" id="RHEA:13097"/>
        <dbReference type="Rhea" id="RHEA-COMP:9925"/>
        <dbReference type="Rhea" id="RHEA-COMP:9945"/>
        <dbReference type="ChEBI" id="CHEBI:15377"/>
        <dbReference type="ChEBI" id="CHEBI:78784"/>
        <dbReference type="ChEBI" id="CHEBI:78827"/>
        <dbReference type="EC" id="4.2.1.59"/>
    </reaction>
</comment>
<comment type="subcellular location">
    <subcellularLocation>
        <location evidence="1">Cytoplasm</location>
    </subcellularLocation>
</comment>
<comment type="similarity">
    <text evidence="1">Belongs to the thioester dehydratase family. FabZ subfamily.</text>
</comment>
<evidence type="ECO:0000255" key="1">
    <source>
        <dbReference type="HAMAP-Rule" id="MF_00406"/>
    </source>
</evidence>
<protein>
    <recommendedName>
        <fullName evidence="1">3-hydroxyacyl-[acyl-carrier-protein] dehydratase FabZ</fullName>
        <ecNumber evidence="1">4.2.1.59</ecNumber>
    </recommendedName>
    <alternativeName>
        <fullName evidence="1">(3R)-hydroxymyristoyl-[acyl-carrier-protein] dehydratase</fullName>
        <shortName evidence="1">(3R)-hydroxymyristoyl-ACP dehydrase</shortName>
    </alternativeName>
    <alternativeName>
        <fullName evidence="1">Beta-hydroxyacyl-ACP dehydratase</fullName>
    </alternativeName>
</protein>
<gene>
    <name evidence="1" type="primary">fabZ</name>
    <name type="ordered locus">BA_5508</name>
    <name type="ordered locus">GBAA_5508</name>
    <name type="ordered locus">BAS5116</name>
</gene>
<sequence length="144" mass="16098">MLDIQQIKEIIPHRYPFLLVDKVLEVEEGKRAIGIKNVTANEEFFNGHFPDYPVMPGVLIVEALAQVGAVAMLKKEENRGRLAFFAGIDNCRFKRQVRPGDQLRLEVEMTRVRGAIGKGKAIATVDGEIACETEITFALGDKKE</sequence>
<keyword id="KW-0963">Cytoplasm</keyword>
<keyword id="KW-0441">Lipid A biosynthesis</keyword>
<keyword id="KW-0444">Lipid biosynthesis</keyword>
<keyword id="KW-0443">Lipid metabolism</keyword>
<keyword id="KW-0456">Lyase</keyword>
<keyword id="KW-1185">Reference proteome</keyword>
<organism>
    <name type="scientific">Bacillus anthracis</name>
    <dbReference type="NCBI Taxonomy" id="1392"/>
    <lineage>
        <taxon>Bacteria</taxon>
        <taxon>Bacillati</taxon>
        <taxon>Bacillota</taxon>
        <taxon>Bacilli</taxon>
        <taxon>Bacillales</taxon>
        <taxon>Bacillaceae</taxon>
        <taxon>Bacillus</taxon>
        <taxon>Bacillus cereus group</taxon>
    </lineage>
</organism>
<name>FABZ_BACAN</name>